<feature type="chain" id="PRO_1000071674" description="Threonine--tRNA ligase">
    <location>
        <begin position="1"/>
        <end position="602"/>
    </location>
</feature>
<feature type="region of interest" description="Catalytic" evidence="1">
    <location>
        <begin position="208"/>
        <end position="499"/>
    </location>
</feature>
<feature type="binding site" evidence="1">
    <location>
        <position position="300"/>
    </location>
    <ligand>
        <name>Zn(2+)</name>
        <dbReference type="ChEBI" id="CHEBI:29105"/>
    </ligand>
</feature>
<feature type="binding site" evidence="1">
    <location>
        <position position="351"/>
    </location>
    <ligand>
        <name>Zn(2+)</name>
        <dbReference type="ChEBI" id="CHEBI:29105"/>
    </ligand>
</feature>
<feature type="binding site" evidence="1">
    <location>
        <position position="476"/>
    </location>
    <ligand>
        <name>Zn(2+)</name>
        <dbReference type="ChEBI" id="CHEBI:29105"/>
    </ligand>
</feature>
<accession>A8FK07</accession>
<reference key="1">
    <citation type="journal article" date="2007" name="J. Bacteriol.">
        <title>The complete genome sequence of Campylobacter jejuni strain 81116 (NCTC11828).</title>
        <authorList>
            <person name="Pearson B.M."/>
            <person name="Gaskin D.J.H."/>
            <person name="Segers R.P.A.M."/>
            <person name="Wells J.M."/>
            <person name="Nuijten P.J.M."/>
            <person name="van Vliet A.H.M."/>
        </authorList>
    </citation>
    <scope>NUCLEOTIDE SEQUENCE [LARGE SCALE GENOMIC DNA]</scope>
    <source>
        <strain>81116 / NCTC 11828</strain>
    </source>
</reference>
<evidence type="ECO:0000255" key="1">
    <source>
        <dbReference type="HAMAP-Rule" id="MF_00184"/>
    </source>
</evidence>
<name>SYT_CAMJ8</name>
<protein>
    <recommendedName>
        <fullName evidence="1">Threonine--tRNA ligase</fullName>
        <ecNumber evidence="1">6.1.1.3</ecNumber>
    </recommendedName>
    <alternativeName>
        <fullName evidence="1">Threonyl-tRNA synthetase</fullName>
        <shortName evidence="1">ThrRS</shortName>
    </alternativeName>
</protein>
<sequence>MEKEVIAYLDNETIIDSQSVKNTNLKEIYFDNSKESLEVIRHSCAHLMAQAIKNLYPEAKFFVGPVIEDGFYYDFRVESKIGEEDLVKIEKKMKELAEAKIEISKYEITKNEALAKFQNDDLKQEVLLRIPDGAVSIYKQGEFEDLCRGPHVPNTKFLRFFKLTRVAGAYLGGDEKREMLTRIYGTAFADKESLKEYLTIIEEAKKRDHRKLGTELKLFTFDDEIGGGLPIWLSNGARLRSKLEHILYKIHRLRGYEPVRGPELLKADAWKISGHYANYKENMYFTQIDEQEYGIKPMNCVGHIKIYQSDVRSYRDLPLKFFEYGVVHRHEKSGVLHGLFRVREFTQDDAHIFCMPSQIKEQVLEILAFVDNLMKLFDFSYEMEISTKPEKAIGDDEIWEVATKALKEALDEQGLKYGIDEGGGAFYGPKIDIKITDALKRKWQCGTIQVDFNLPSRFKLEYTDSDNEKKQPVMLHRAILGSFERFIGILTEHCAGEFPFFIAPTAVGIVPIGEAHIAYAKEIQKELLELNIDSEVYEKNESLSKKIRTAEKQKLPMILVLGDDEVAKRSVALRDRRAKEQKNLSLDEFIKLVKEKMSEVHF</sequence>
<keyword id="KW-0030">Aminoacyl-tRNA synthetase</keyword>
<keyword id="KW-0067">ATP-binding</keyword>
<keyword id="KW-0963">Cytoplasm</keyword>
<keyword id="KW-0436">Ligase</keyword>
<keyword id="KW-0479">Metal-binding</keyword>
<keyword id="KW-0547">Nucleotide-binding</keyword>
<keyword id="KW-0648">Protein biosynthesis</keyword>
<keyword id="KW-0694">RNA-binding</keyword>
<keyword id="KW-0820">tRNA-binding</keyword>
<keyword id="KW-0862">Zinc</keyword>
<gene>
    <name evidence="1" type="primary">thrS</name>
    <name type="ordered locus">C8J_0195</name>
</gene>
<comment type="function">
    <text evidence="1">Catalyzes the attachment of threonine to tRNA(Thr) in a two-step reaction: L-threonine is first activated by ATP to form Thr-AMP and then transferred to the acceptor end of tRNA(Thr). Also edits incorrectly charged L-seryl-tRNA(Thr).</text>
</comment>
<comment type="catalytic activity">
    <reaction evidence="1">
        <text>tRNA(Thr) + L-threonine + ATP = L-threonyl-tRNA(Thr) + AMP + diphosphate + H(+)</text>
        <dbReference type="Rhea" id="RHEA:24624"/>
        <dbReference type="Rhea" id="RHEA-COMP:9670"/>
        <dbReference type="Rhea" id="RHEA-COMP:9704"/>
        <dbReference type="ChEBI" id="CHEBI:15378"/>
        <dbReference type="ChEBI" id="CHEBI:30616"/>
        <dbReference type="ChEBI" id="CHEBI:33019"/>
        <dbReference type="ChEBI" id="CHEBI:57926"/>
        <dbReference type="ChEBI" id="CHEBI:78442"/>
        <dbReference type="ChEBI" id="CHEBI:78534"/>
        <dbReference type="ChEBI" id="CHEBI:456215"/>
        <dbReference type="EC" id="6.1.1.3"/>
    </reaction>
</comment>
<comment type="cofactor">
    <cofactor evidence="1">
        <name>Zn(2+)</name>
        <dbReference type="ChEBI" id="CHEBI:29105"/>
    </cofactor>
    <text evidence="1">Binds 1 zinc ion per subunit.</text>
</comment>
<comment type="subunit">
    <text evidence="1">Homodimer.</text>
</comment>
<comment type="subcellular location">
    <subcellularLocation>
        <location evidence="1">Cytoplasm</location>
    </subcellularLocation>
</comment>
<comment type="similarity">
    <text evidence="1">Belongs to the class-II aminoacyl-tRNA synthetase family.</text>
</comment>
<dbReference type="EC" id="6.1.1.3" evidence="1"/>
<dbReference type="EMBL" id="CP000814">
    <property type="protein sequence ID" value="ABV51794.1"/>
    <property type="molecule type" value="Genomic_DNA"/>
</dbReference>
<dbReference type="RefSeq" id="WP_002866362.1">
    <property type="nucleotide sequence ID" value="NC_009839.1"/>
</dbReference>
<dbReference type="SMR" id="A8FK07"/>
<dbReference type="KEGG" id="cju:C8J_0195"/>
<dbReference type="HOGENOM" id="CLU_008554_0_1_7"/>
<dbReference type="GO" id="GO:0005829">
    <property type="term" value="C:cytosol"/>
    <property type="evidence" value="ECO:0007669"/>
    <property type="project" value="TreeGrafter"/>
</dbReference>
<dbReference type="GO" id="GO:0005524">
    <property type="term" value="F:ATP binding"/>
    <property type="evidence" value="ECO:0007669"/>
    <property type="project" value="UniProtKB-UniRule"/>
</dbReference>
<dbReference type="GO" id="GO:0046872">
    <property type="term" value="F:metal ion binding"/>
    <property type="evidence" value="ECO:0007669"/>
    <property type="project" value="UniProtKB-KW"/>
</dbReference>
<dbReference type="GO" id="GO:0004829">
    <property type="term" value="F:threonine-tRNA ligase activity"/>
    <property type="evidence" value="ECO:0007669"/>
    <property type="project" value="UniProtKB-UniRule"/>
</dbReference>
<dbReference type="GO" id="GO:0000049">
    <property type="term" value="F:tRNA binding"/>
    <property type="evidence" value="ECO:0007669"/>
    <property type="project" value="UniProtKB-KW"/>
</dbReference>
<dbReference type="GO" id="GO:0006435">
    <property type="term" value="P:threonyl-tRNA aminoacylation"/>
    <property type="evidence" value="ECO:0007669"/>
    <property type="project" value="UniProtKB-UniRule"/>
</dbReference>
<dbReference type="CDD" id="cd00860">
    <property type="entry name" value="ThrRS_anticodon"/>
    <property type="match status" value="1"/>
</dbReference>
<dbReference type="CDD" id="cd00771">
    <property type="entry name" value="ThrRS_core"/>
    <property type="match status" value="1"/>
</dbReference>
<dbReference type="FunFam" id="3.30.930.10:FF:000019">
    <property type="entry name" value="Threonine--tRNA ligase"/>
    <property type="match status" value="1"/>
</dbReference>
<dbReference type="FunFam" id="3.30.980.10:FF:000005">
    <property type="entry name" value="Threonyl-tRNA synthetase, mitochondrial"/>
    <property type="match status" value="1"/>
</dbReference>
<dbReference type="Gene3D" id="3.30.54.20">
    <property type="match status" value="1"/>
</dbReference>
<dbReference type="Gene3D" id="3.40.50.800">
    <property type="entry name" value="Anticodon-binding domain"/>
    <property type="match status" value="1"/>
</dbReference>
<dbReference type="Gene3D" id="3.30.930.10">
    <property type="entry name" value="Bira Bifunctional Protein, Domain 2"/>
    <property type="match status" value="1"/>
</dbReference>
<dbReference type="Gene3D" id="3.30.980.10">
    <property type="entry name" value="Threonyl-trna Synthetase, Chain A, domain 2"/>
    <property type="match status" value="1"/>
</dbReference>
<dbReference type="HAMAP" id="MF_00184">
    <property type="entry name" value="Thr_tRNA_synth"/>
    <property type="match status" value="1"/>
</dbReference>
<dbReference type="InterPro" id="IPR002314">
    <property type="entry name" value="aa-tRNA-synt_IIb"/>
</dbReference>
<dbReference type="InterPro" id="IPR006195">
    <property type="entry name" value="aa-tRNA-synth_II"/>
</dbReference>
<dbReference type="InterPro" id="IPR045864">
    <property type="entry name" value="aa-tRNA-synth_II/BPL/LPL"/>
</dbReference>
<dbReference type="InterPro" id="IPR004154">
    <property type="entry name" value="Anticodon-bd"/>
</dbReference>
<dbReference type="InterPro" id="IPR036621">
    <property type="entry name" value="Anticodon-bd_dom_sf"/>
</dbReference>
<dbReference type="InterPro" id="IPR002320">
    <property type="entry name" value="Thr-tRNA-ligase_IIa"/>
</dbReference>
<dbReference type="InterPro" id="IPR018163">
    <property type="entry name" value="Thr/Ala-tRNA-synth_IIc_edit"/>
</dbReference>
<dbReference type="InterPro" id="IPR047246">
    <property type="entry name" value="ThrRS_anticodon"/>
</dbReference>
<dbReference type="InterPro" id="IPR033728">
    <property type="entry name" value="ThrRS_core"/>
</dbReference>
<dbReference type="InterPro" id="IPR012947">
    <property type="entry name" value="tRNA_SAD"/>
</dbReference>
<dbReference type="NCBIfam" id="TIGR00418">
    <property type="entry name" value="thrS"/>
    <property type="match status" value="1"/>
</dbReference>
<dbReference type="PANTHER" id="PTHR11451:SF44">
    <property type="entry name" value="THREONINE--TRNA LIGASE, CHLOROPLASTIC_MITOCHONDRIAL 2"/>
    <property type="match status" value="1"/>
</dbReference>
<dbReference type="PANTHER" id="PTHR11451">
    <property type="entry name" value="THREONINE-TRNA LIGASE"/>
    <property type="match status" value="1"/>
</dbReference>
<dbReference type="Pfam" id="PF03129">
    <property type="entry name" value="HGTP_anticodon"/>
    <property type="match status" value="1"/>
</dbReference>
<dbReference type="Pfam" id="PF00587">
    <property type="entry name" value="tRNA-synt_2b"/>
    <property type="match status" value="1"/>
</dbReference>
<dbReference type="Pfam" id="PF07973">
    <property type="entry name" value="tRNA_SAD"/>
    <property type="match status" value="1"/>
</dbReference>
<dbReference type="PRINTS" id="PR01047">
    <property type="entry name" value="TRNASYNTHTHR"/>
</dbReference>
<dbReference type="SMART" id="SM00863">
    <property type="entry name" value="tRNA_SAD"/>
    <property type="match status" value="1"/>
</dbReference>
<dbReference type="SUPFAM" id="SSF52954">
    <property type="entry name" value="Class II aaRS ABD-related"/>
    <property type="match status" value="1"/>
</dbReference>
<dbReference type="SUPFAM" id="SSF55681">
    <property type="entry name" value="Class II aaRS and biotin synthetases"/>
    <property type="match status" value="1"/>
</dbReference>
<dbReference type="SUPFAM" id="SSF55186">
    <property type="entry name" value="ThrRS/AlaRS common domain"/>
    <property type="match status" value="1"/>
</dbReference>
<dbReference type="PROSITE" id="PS50862">
    <property type="entry name" value="AA_TRNA_LIGASE_II"/>
    <property type="match status" value="1"/>
</dbReference>
<organism>
    <name type="scientific">Campylobacter jejuni subsp. jejuni serotype O:6 (strain 81116 / NCTC 11828)</name>
    <dbReference type="NCBI Taxonomy" id="407148"/>
    <lineage>
        <taxon>Bacteria</taxon>
        <taxon>Pseudomonadati</taxon>
        <taxon>Campylobacterota</taxon>
        <taxon>Epsilonproteobacteria</taxon>
        <taxon>Campylobacterales</taxon>
        <taxon>Campylobacteraceae</taxon>
        <taxon>Campylobacter</taxon>
    </lineage>
</organism>
<proteinExistence type="inferred from homology"/>